<organism>
    <name type="scientific">Haemophilus ducreyi (strain 35000HP / ATCC 700724)</name>
    <dbReference type="NCBI Taxonomy" id="233412"/>
    <lineage>
        <taxon>Bacteria</taxon>
        <taxon>Pseudomonadati</taxon>
        <taxon>Pseudomonadota</taxon>
        <taxon>Gammaproteobacteria</taxon>
        <taxon>Pasteurellales</taxon>
        <taxon>Pasteurellaceae</taxon>
        <taxon>Haemophilus</taxon>
    </lineage>
</organism>
<evidence type="ECO:0000255" key="1">
    <source>
        <dbReference type="HAMAP-Rule" id="MF_00182"/>
    </source>
</evidence>
<name>FMT_HAEDU</name>
<proteinExistence type="inferred from homology"/>
<sequence>MSKLNIIFAGTPEFAAQHLQALLASQHNIVAVYTQPDKPAGRGKKLQASPVKQLALQHNIPVYQPKSLRNPQAQAELNALNGDVMVVVAYGLILPEAVLHIPRYGCLNVHGSLLPRWRGAAPIQRAIWAGDQETGVTIMQMDAGLDTGDMLHKVSTKIEADETSASLYMKLAKLAPPALLAVLDGLTEQQFKPEKQDNQLANYAEKLSKQEAKLDWNLPAYQLAQNIRAFNPWPMSFLTVEVEGVEQHVKVYQATVLAHQYHAVGTVLQVDKNGIQIATSEGVLNITQLQPQGKKPMSVQDFLNGRANWFSLGKKL</sequence>
<gene>
    <name evidence="1" type="primary">fmt</name>
    <name type="ordered locus">HD_2029</name>
</gene>
<protein>
    <recommendedName>
        <fullName evidence="1">Methionyl-tRNA formyltransferase</fullName>
        <ecNumber evidence="1">2.1.2.9</ecNumber>
    </recommendedName>
</protein>
<keyword id="KW-0648">Protein biosynthesis</keyword>
<keyword id="KW-1185">Reference proteome</keyword>
<keyword id="KW-0808">Transferase</keyword>
<comment type="function">
    <text evidence="1">Attaches a formyl group to the free amino group of methionyl-tRNA(fMet). The formyl group appears to play a dual role in the initiator identity of N-formylmethionyl-tRNA by promoting its recognition by IF2 and preventing the misappropriation of this tRNA by the elongation apparatus.</text>
</comment>
<comment type="catalytic activity">
    <reaction evidence="1">
        <text>L-methionyl-tRNA(fMet) + (6R)-10-formyltetrahydrofolate = N-formyl-L-methionyl-tRNA(fMet) + (6S)-5,6,7,8-tetrahydrofolate + H(+)</text>
        <dbReference type="Rhea" id="RHEA:24380"/>
        <dbReference type="Rhea" id="RHEA-COMP:9952"/>
        <dbReference type="Rhea" id="RHEA-COMP:9953"/>
        <dbReference type="ChEBI" id="CHEBI:15378"/>
        <dbReference type="ChEBI" id="CHEBI:57453"/>
        <dbReference type="ChEBI" id="CHEBI:78530"/>
        <dbReference type="ChEBI" id="CHEBI:78844"/>
        <dbReference type="ChEBI" id="CHEBI:195366"/>
        <dbReference type="EC" id="2.1.2.9"/>
    </reaction>
</comment>
<comment type="similarity">
    <text evidence="1">Belongs to the Fmt family.</text>
</comment>
<accession>Q7VK98</accession>
<feature type="chain" id="PRO_0000082972" description="Methionyl-tRNA formyltransferase">
    <location>
        <begin position="1"/>
        <end position="316"/>
    </location>
</feature>
<feature type="binding site" evidence="1">
    <location>
        <begin position="112"/>
        <end position="115"/>
    </location>
    <ligand>
        <name>(6S)-5,6,7,8-tetrahydrofolate</name>
        <dbReference type="ChEBI" id="CHEBI:57453"/>
    </ligand>
</feature>
<reference key="1">
    <citation type="submission" date="2003-06" db="EMBL/GenBank/DDBJ databases">
        <title>The complete genome sequence of Haemophilus ducreyi.</title>
        <authorList>
            <person name="Munson R.S. Jr."/>
            <person name="Ray W.C."/>
            <person name="Mahairas G."/>
            <person name="Sabo P."/>
            <person name="Mungur R."/>
            <person name="Johnson L."/>
            <person name="Nguyen D."/>
            <person name="Wang J."/>
            <person name="Forst C."/>
            <person name="Hood L."/>
        </authorList>
    </citation>
    <scope>NUCLEOTIDE SEQUENCE [LARGE SCALE GENOMIC DNA]</scope>
    <source>
        <strain>35000HP / ATCC 700724</strain>
    </source>
</reference>
<dbReference type="EC" id="2.1.2.9" evidence="1"/>
<dbReference type="EMBL" id="AE017143">
    <property type="protein sequence ID" value="AAP96735.1"/>
    <property type="molecule type" value="Genomic_DNA"/>
</dbReference>
<dbReference type="RefSeq" id="WP_010945756.1">
    <property type="nucleotide sequence ID" value="NC_002940.2"/>
</dbReference>
<dbReference type="SMR" id="Q7VK98"/>
<dbReference type="STRING" id="233412.HD_2029"/>
<dbReference type="KEGG" id="hdu:HD_2029"/>
<dbReference type="eggNOG" id="COG0223">
    <property type="taxonomic scope" value="Bacteria"/>
</dbReference>
<dbReference type="HOGENOM" id="CLU_033347_1_2_6"/>
<dbReference type="OrthoDB" id="9802815at2"/>
<dbReference type="Proteomes" id="UP000001022">
    <property type="component" value="Chromosome"/>
</dbReference>
<dbReference type="GO" id="GO:0005829">
    <property type="term" value="C:cytosol"/>
    <property type="evidence" value="ECO:0007669"/>
    <property type="project" value="TreeGrafter"/>
</dbReference>
<dbReference type="GO" id="GO:0004479">
    <property type="term" value="F:methionyl-tRNA formyltransferase activity"/>
    <property type="evidence" value="ECO:0007669"/>
    <property type="project" value="UniProtKB-UniRule"/>
</dbReference>
<dbReference type="CDD" id="cd08646">
    <property type="entry name" value="FMT_core_Met-tRNA-FMT_N"/>
    <property type="match status" value="1"/>
</dbReference>
<dbReference type="CDD" id="cd08704">
    <property type="entry name" value="Met_tRNA_FMT_C"/>
    <property type="match status" value="1"/>
</dbReference>
<dbReference type="FunFam" id="3.40.50.170:FF:000003">
    <property type="entry name" value="Methionyl-tRNA formyltransferase"/>
    <property type="match status" value="1"/>
</dbReference>
<dbReference type="Gene3D" id="3.10.25.10">
    <property type="entry name" value="Formyl transferase, C-terminal domain"/>
    <property type="match status" value="1"/>
</dbReference>
<dbReference type="Gene3D" id="3.40.50.170">
    <property type="entry name" value="Formyl transferase, N-terminal domain"/>
    <property type="match status" value="1"/>
</dbReference>
<dbReference type="HAMAP" id="MF_00182">
    <property type="entry name" value="Formyl_trans"/>
    <property type="match status" value="1"/>
</dbReference>
<dbReference type="InterPro" id="IPR005794">
    <property type="entry name" value="Fmt"/>
</dbReference>
<dbReference type="InterPro" id="IPR005793">
    <property type="entry name" value="Formyl_trans_C"/>
</dbReference>
<dbReference type="InterPro" id="IPR037022">
    <property type="entry name" value="Formyl_trans_C_sf"/>
</dbReference>
<dbReference type="InterPro" id="IPR002376">
    <property type="entry name" value="Formyl_transf_N"/>
</dbReference>
<dbReference type="InterPro" id="IPR036477">
    <property type="entry name" value="Formyl_transf_N_sf"/>
</dbReference>
<dbReference type="InterPro" id="IPR011034">
    <property type="entry name" value="Formyl_transferase-like_C_sf"/>
</dbReference>
<dbReference type="InterPro" id="IPR001555">
    <property type="entry name" value="GART_AS"/>
</dbReference>
<dbReference type="InterPro" id="IPR044135">
    <property type="entry name" value="Met-tRNA-FMT_C"/>
</dbReference>
<dbReference type="InterPro" id="IPR041711">
    <property type="entry name" value="Met-tRNA-FMT_N"/>
</dbReference>
<dbReference type="NCBIfam" id="TIGR00460">
    <property type="entry name" value="fmt"/>
    <property type="match status" value="1"/>
</dbReference>
<dbReference type="PANTHER" id="PTHR11138">
    <property type="entry name" value="METHIONYL-TRNA FORMYLTRANSFERASE"/>
    <property type="match status" value="1"/>
</dbReference>
<dbReference type="PANTHER" id="PTHR11138:SF5">
    <property type="entry name" value="METHIONYL-TRNA FORMYLTRANSFERASE, MITOCHONDRIAL"/>
    <property type="match status" value="1"/>
</dbReference>
<dbReference type="Pfam" id="PF02911">
    <property type="entry name" value="Formyl_trans_C"/>
    <property type="match status" value="1"/>
</dbReference>
<dbReference type="Pfam" id="PF00551">
    <property type="entry name" value="Formyl_trans_N"/>
    <property type="match status" value="1"/>
</dbReference>
<dbReference type="SUPFAM" id="SSF50486">
    <property type="entry name" value="FMT C-terminal domain-like"/>
    <property type="match status" value="1"/>
</dbReference>
<dbReference type="SUPFAM" id="SSF53328">
    <property type="entry name" value="Formyltransferase"/>
    <property type="match status" value="1"/>
</dbReference>
<dbReference type="PROSITE" id="PS00373">
    <property type="entry name" value="GART"/>
    <property type="match status" value="1"/>
</dbReference>